<evidence type="ECO:0000250" key="1">
    <source>
        <dbReference type="UniProtKB" id="P04798"/>
    </source>
</evidence>
<evidence type="ECO:0000255" key="2"/>
<evidence type="ECO:0000255" key="3">
    <source>
        <dbReference type="PROSITE-ProRule" id="PRU00498"/>
    </source>
</evidence>
<evidence type="ECO:0000269" key="4">
    <source>
    </source>
</evidence>
<evidence type="ECO:0000269" key="5">
    <source>
    </source>
</evidence>
<evidence type="ECO:0000303" key="6">
    <source>
    </source>
</evidence>
<evidence type="ECO:0000303" key="7">
    <source>
    </source>
</evidence>
<evidence type="ECO:0000305" key="8"/>
<proteinExistence type="evidence at protein level"/>
<protein>
    <recommendedName>
        <fullName evidence="6 7">7-deoxyloganic acid hydroxylase</fullName>
        <shortName evidence="6 7">Cr7DLH</shortName>
        <ecNumber evidence="4 5">1.14.14.85</ecNumber>
    </recommendedName>
    <alternativeName>
        <fullName evidence="7">Cytochrome P450 72A224</fullName>
        <shortName evidence="7">CYP72A224</shortName>
    </alternativeName>
</protein>
<reference key="1">
    <citation type="journal article" date="2013" name="Plant J.">
        <title>Virus-induced gene silencing identifies Catharanthus roseus 7-deoxyloganic acid-7-hydroxylase, a step in iridoid and monoterpene indole alkaloid biosynthesis.</title>
        <authorList>
            <person name="Salim V."/>
            <person name="Yu F."/>
            <person name="Altarejos J."/>
            <person name="De Luca V."/>
        </authorList>
    </citation>
    <scope>NUCLEOTIDE SEQUENCE [MRNA]</scope>
    <scope>FUNCTION</scope>
    <scope>DISRUPTION PHENOTYPE</scope>
    <scope>CATALYTIC ACTIVITY</scope>
    <scope>BIOPHYSICOCHEMICAL PROPERTIES</scope>
    <scope>TISSUE SPECIFICITY</scope>
    <scope>DEVELOPMENTAL STAGE</scope>
</reference>
<reference key="2">
    <citation type="journal article" date="2014" name="Nat. Commun.">
        <title>The seco-iridoid pathway from Catharanthus roseus.</title>
        <authorList>
            <person name="Miettinen K."/>
            <person name="Dong L."/>
            <person name="Navrot N."/>
            <person name="Schneider T."/>
            <person name="Burlat V."/>
            <person name="Pollier J."/>
            <person name="Woittiez L."/>
            <person name="van der Krol S."/>
            <person name="Lugan R."/>
            <person name="Ilc T."/>
            <person name="Verpoorte R."/>
            <person name="Oksman-Caldentey K.M."/>
            <person name="Martinoia E."/>
            <person name="Bouwmeester H."/>
            <person name="Goossens A."/>
            <person name="Memelink J."/>
            <person name="Werck-Reichhart D."/>
        </authorList>
    </citation>
    <scope>NUCLEOTIDE SEQUENCE [MRNA]</scope>
    <scope>FUNCTION</scope>
    <scope>CATALYTIC ACTIVITY</scope>
    <scope>TISSUE SPECIFICITY</scope>
    <scope>INDUCTION BY JASMONIC ACID</scope>
    <scope>PATHWAY</scope>
    <scope>SUBCELLULAR LOCATION</scope>
    <scope>BIOPHYSICOCHEMICAL PROPERTIES</scope>
    <source>
        <strain>cv. Little Bright Eyes</strain>
    </source>
</reference>
<organism>
    <name type="scientific">Catharanthus roseus</name>
    <name type="common">Madagascar periwinkle</name>
    <name type="synonym">Vinca rosea</name>
    <dbReference type="NCBI Taxonomy" id="4058"/>
    <lineage>
        <taxon>Eukaryota</taxon>
        <taxon>Viridiplantae</taxon>
        <taxon>Streptophyta</taxon>
        <taxon>Embryophyta</taxon>
        <taxon>Tracheophyta</taxon>
        <taxon>Spermatophyta</taxon>
        <taxon>Magnoliopsida</taxon>
        <taxon>eudicotyledons</taxon>
        <taxon>Gunneridae</taxon>
        <taxon>Pentapetalae</taxon>
        <taxon>asterids</taxon>
        <taxon>lamiids</taxon>
        <taxon>Gentianales</taxon>
        <taxon>Apocynaceae</taxon>
        <taxon>Rauvolfioideae</taxon>
        <taxon>Vinceae</taxon>
        <taxon>Catharanthinae</taxon>
        <taxon>Catharanthus</taxon>
    </lineage>
</organism>
<feature type="chain" id="PRO_0000446408" description="7-deoxyloganic acid hydroxylase">
    <location>
        <begin position="1"/>
        <end position="521"/>
    </location>
</feature>
<feature type="transmembrane region" description="Helical" evidence="2">
    <location>
        <begin position="8"/>
        <end position="28"/>
    </location>
</feature>
<feature type="binding site" description="axial binding residue" evidence="1">
    <location>
        <position position="469"/>
    </location>
    <ligand>
        <name>heme</name>
        <dbReference type="ChEBI" id="CHEBI:30413"/>
    </ligand>
    <ligandPart>
        <name>Fe</name>
        <dbReference type="ChEBI" id="CHEBI:18248"/>
    </ligandPart>
</feature>
<feature type="glycosylation site" description="N-linked (GlcNAc...) asparagine" evidence="3">
    <location>
        <position position="107"/>
    </location>
</feature>
<feature type="glycosylation site" description="N-linked (GlcNAc...) asparagine" evidence="3">
    <location>
        <position position="311"/>
    </location>
</feature>
<dbReference type="EC" id="1.14.14.85" evidence="4 5"/>
<dbReference type="EMBL" id="KF415115">
    <property type="protein sequence ID" value="AGX93062.1"/>
    <property type="molecule type" value="mRNA"/>
</dbReference>
<dbReference type="EMBL" id="KF302067">
    <property type="protein sequence ID" value="AHK60834.1"/>
    <property type="molecule type" value="mRNA"/>
</dbReference>
<dbReference type="SMR" id="U5NE19"/>
<dbReference type="GlyCosmos" id="U5NE19">
    <property type="glycosylation" value="2 sites, No reported glycans"/>
</dbReference>
<dbReference type="KEGG" id="ag:AHK60834"/>
<dbReference type="OrthoDB" id="1470350at2759"/>
<dbReference type="BioCyc" id="MetaCyc:MONOMER-20522"/>
<dbReference type="SABIO-RK" id="U5NE19"/>
<dbReference type="GO" id="GO:0005783">
    <property type="term" value="C:endoplasmic reticulum"/>
    <property type="evidence" value="ECO:0000314"/>
    <property type="project" value="UniProtKB"/>
</dbReference>
<dbReference type="GO" id="GO:0005789">
    <property type="term" value="C:endoplasmic reticulum membrane"/>
    <property type="evidence" value="ECO:0007669"/>
    <property type="project" value="UniProtKB-SubCell"/>
</dbReference>
<dbReference type="GO" id="GO:0140989">
    <property type="term" value="F:7-deoxyloganate 7-hydroxylase activity"/>
    <property type="evidence" value="ECO:0007669"/>
    <property type="project" value="RHEA"/>
</dbReference>
<dbReference type="GO" id="GO:0050595">
    <property type="term" value="F:7-deoxyloganin 7-hydroxylase activity"/>
    <property type="evidence" value="ECO:0000314"/>
    <property type="project" value="UniProtKB"/>
</dbReference>
<dbReference type="GO" id="GO:0020037">
    <property type="term" value="F:heme binding"/>
    <property type="evidence" value="ECO:0007669"/>
    <property type="project" value="InterPro"/>
</dbReference>
<dbReference type="GO" id="GO:0005506">
    <property type="term" value="F:iron ion binding"/>
    <property type="evidence" value="ECO:0007669"/>
    <property type="project" value="InterPro"/>
</dbReference>
<dbReference type="GO" id="GO:0035834">
    <property type="term" value="P:indole alkaloid metabolic process"/>
    <property type="evidence" value="ECO:0000314"/>
    <property type="project" value="UniProtKB"/>
</dbReference>
<dbReference type="GO" id="GO:0009753">
    <property type="term" value="P:response to jasmonic acid"/>
    <property type="evidence" value="ECO:0000314"/>
    <property type="project" value="UniProtKB"/>
</dbReference>
<dbReference type="CDD" id="cd20642">
    <property type="entry name" value="CYP72"/>
    <property type="match status" value="1"/>
</dbReference>
<dbReference type="FunFam" id="1.10.630.10:FF:000029">
    <property type="entry name" value="Cytochrome P450 734A1"/>
    <property type="match status" value="1"/>
</dbReference>
<dbReference type="Gene3D" id="1.10.630.10">
    <property type="entry name" value="Cytochrome P450"/>
    <property type="match status" value="1"/>
</dbReference>
<dbReference type="InterPro" id="IPR001128">
    <property type="entry name" value="Cyt_P450"/>
</dbReference>
<dbReference type="InterPro" id="IPR017972">
    <property type="entry name" value="Cyt_P450_CS"/>
</dbReference>
<dbReference type="InterPro" id="IPR002401">
    <property type="entry name" value="Cyt_P450_E_grp-I"/>
</dbReference>
<dbReference type="InterPro" id="IPR036396">
    <property type="entry name" value="Cyt_P450_sf"/>
</dbReference>
<dbReference type="InterPro" id="IPR050665">
    <property type="entry name" value="Cytochrome_P450_Monooxygen"/>
</dbReference>
<dbReference type="PANTHER" id="PTHR24282:SF273">
    <property type="entry name" value="CYTOCHROME P450 CYP72A219-LIKE"/>
    <property type="match status" value="1"/>
</dbReference>
<dbReference type="PANTHER" id="PTHR24282">
    <property type="entry name" value="CYTOCHROME P450 FAMILY MEMBER"/>
    <property type="match status" value="1"/>
</dbReference>
<dbReference type="Pfam" id="PF00067">
    <property type="entry name" value="p450"/>
    <property type="match status" value="1"/>
</dbReference>
<dbReference type="PRINTS" id="PR00463">
    <property type="entry name" value="EP450I"/>
</dbReference>
<dbReference type="PRINTS" id="PR00385">
    <property type="entry name" value="P450"/>
</dbReference>
<dbReference type="SUPFAM" id="SSF48264">
    <property type="entry name" value="Cytochrome P450"/>
    <property type="match status" value="1"/>
</dbReference>
<dbReference type="PROSITE" id="PS00086">
    <property type="entry name" value="CYTOCHROME_P450"/>
    <property type="match status" value="1"/>
</dbReference>
<gene>
    <name evidence="6 7" type="primary">7DLH</name>
    <name evidence="7" type="synonym">CYP72A224</name>
    <name evidence="7" type="ORF">Caros005234</name>
</gene>
<name>7DLH_CATRO</name>
<keyword id="KW-0256">Endoplasmic reticulum</keyword>
<keyword id="KW-0325">Glycoprotein</keyword>
<keyword id="KW-0349">Heme</keyword>
<keyword id="KW-0408">Iron</keyword>
<keyword id="KW-0472">Membrane</keyword>
<keyword id="KW-0479">Metal-binding</keyword>
<keyword id="KW-0503">Monooxygenase</keyword>
<keyword id="KW-0560">Oxidoreductase</keyword>
<keyword id="KW-0812">Transmembrane</keyword>
<keyword id="KW-1133">Transmembrane helix</keyword>
<sequence>MELNFKSIIFLVFVSLTLYWVYRILDWVWFKPKKLEKCLREQGFKGNPYRLFLGDQYDSGKLIRQALTKPIGVEEDVKKRIVPHILKTVGTHGKKSFMWVGRIPRVNITDPELIKEVLTKYYKFQKNHHDLDPITKLLLTGIGSLEGDPWAKRRKIINAAFHFEKLKLMLPAFYLSCRDMVTKWDNKVPEGGSAEVDVWHDIETLTGDVISRTLFGSNFEEGRRIFELMKELTALTIDVIRSVYIPGQRFLPTKRNNRMRAIDKEVRVRITEIINKKMKVMKSGEAASAADDFLGILLECNLNEIKEQGNNKSAGMTIGEIIGECKLFYFAGQDTTSTLLVWTMVLLSRFPEWQTRAREEVFQVFGNKTPDYDGISHLKVITMILYEVLRLYTPVAELTKVAHEATQLGKYFIPAGVQLMMPQILLHHDPEIWGEDVMEFKPERFAEGVLKATKSQGSFFPFSLGPRMCIGQNFALLEAKMAMSLILRRFSFELSPSYVHAPFTLITMQPQYGAHLILHKL</sequence>
<comment type="function">
    <text evidence="4 5">Component of the seco-iridoid and derivatives monoterpenoid indole alkaloids (MIAs, e.g. vincristine, quinine, and strychnine) biosynthesis pathway. Catalyzes the conversion of 7-deoxyloganic acid into loganic acid (PubMed:24103035, PubMed:24710322). Not active on 7-deoxyloganetic acid (PubMed:24710322).</text>
</comment>
<comment type="catalytic activity">
    <reaction evidence="4 5">
        <text>7-deoxyloganate + reduced [NADPH--hemoprotein reductase] + O2 = loganate + oxidized [NADPH--hemoprotein reductase] + H2O + H(+)</text>
        <dbReference type="Rhea" id="RHEA:57576"/>
        <dbReference type="Rhea" id="RHEA-COMP:11964"/>
        <dbReference type="Rhea" id="RHEA-COMP:11965"/>
        <dbReference type="ChEBI" id="CHEBI:15377"/>
        <dbReference type="ChEBI" id="CHEBI:15378"/>
        <dbReference type="ChEBI" id="CHEBI:15379"/>
        <dbReference type="ChEBI" id="CHEBI:18052"/>
        <dbReference type="ChEBI" id="CHEBI:57618"/>
        <dbReference type="ChEBI" id="CHEBI:58210"/>
        <dbReference type="ChEBI" id="CHEBI:76844"/>
        <dbReference type="EC" id="1.14.14.85"/>
    </reaction>
    <physiologicalReaction direction="left-to-right" evidence="4 5">
        <dbReference type="Rhea" id="RHEA:57577"/>
    </physiologicalReaction>
</comment>
<comment type="biophysicochemical properties">
    <kinetics>
        <KM evidence="4">111 uM for 7-deoxyloganic acid</KM>
        <KM evidence="4">30 uM for NADPH</KM>
        <Vmax evidence="4">5.5 umol/min/ug enzyme with 7-deoxyloganic acid as substrate</Vmax>
        <Vmax evidence="4">4.19 umol/min/ug enzyme with NADPH as substrate</Vmax>
        <Vmax evidence="5">0.01 pmol/sec/mg enzyme with 7-deoxyloganic acid as substrate</Vmax>
    </kinetics>
</comment>
<comment type="pathway">
    <text evidence="5">Alkaloid biosynthesis.</text>
</comment>
<comment type="subcellular location">
    <subcellularLocation>
        <location evidence="5">Endoplasmic reticulum membrane</location>
        <topology evidence="2">Single-pass membrane protein</topology>
    </subcellularLocation>
</comment>
<comment type="tissue specificity">
    <text evidence="4 5">Mostly present in actively growing aerial organs, including leaves, flower buds and stems, and, to a lower extent, in mature leaves, roots and opened flowers (PubMed:24103035). Expressed in the leaf internal phloem-associated parenchyma (IPAP) inside the mesophyll (PubMed:24710322).</text>
</comment>
<comment type="developmental stage">
    <text evidence="4">Expressed at high levels in young leave and fades out during aging.</text>
</comment>
<comment type="induction">
    <text evidence="5">By jasmonic acid (MeJA).</text>
</comment>
<comment type="disruption phenotype">
    <text evidence="4">Reduced secologanin levels but accumulation of 7-deoxyloganic acid.</text>
</comment>
<comment type="similarity">
    <text evidence="8">Belongs to the cytochrome P450 family.</text>
</comment>
<comment type="online information" name="ORCAE database">
    <link uri="https://orcae.psb.ugent.be/taxa/catro/regular/v1/"/>
</comment>
<accession>U5NE19</accession>